<keyword id="KW-1185">Reference proteome</keyword>
<sequence length="221" mass="23872">MKSQFLLKVWVVCVGALLCRCGGARAPQNTGGTKAVEDYHIGVMTGPGSHSSHDVVAAKRACAMYGAVGDGHRGCILHVTYPEDFVNRQDETVSRLLAFADDPLMGAIVVSEGIHGTAEAFNKIRAKRSDIMLFVGDPHEYPELIQKSADIVVSDDYAFGGYAIPWAAKKMGARTLVHVSFPRHLSKAELRTRRQVMEAVCADIGIEFASEEAPDPAGVRC</sequence>
<feature type="chain" id="PRO_0000202175" description="Uncharacterized protein TP_0013">
    <location>
        <begin position="1"/>
        <end position="221"/>
    </location>
</feature>
<dbReference type="EMBL" id="AE000520">
    <property type="protein sequence ID" value="AAC65013.1"/>
    <property type="molecule type" value="Genomic_DNA"/>
</dbReference>
<dbReference type="PIR" id="B71377">
    <property type="entry name" value="B71377"/>
</dbReference>
<dbReference type="SMR" id="O83057"/>
<dbReference type="IntAct" id="O83057">
    <property type="interactions" value="4"/>
</dbReference>
<dbReference type="STRING" id="243276.TP_0013"/>
<dbReference type="EnsemblBacteria" id="AAC65013">
    <property type="protein sequence ID" value="AAC65013"/>
    <property type="gene ID" value="TP_0013"/>
</dbReference>
<dbReference type="KEGG" id="tpa:TP_0013"/>
<dbReference type="eggNOG" id="COG1609">
    <property type="taxonomic scope" value="Bacteria"/>
</dbReference>
<dbReference type="HOGENOM" id="CLU_1114543_0_0_12"/>
<dbReference type="Proteomes" id="UP000000811">
    <property type="component" value="Chromosome"/>
</dbReference>
<dbReference type="Gene3D" id="3.40.50.11400">
    <property type="match status" value="1"/>
</dbReference>
<dbReference type="InterPro" id="IPR024258">
    <property type="entry name" value="DUF3798"/>
</dbReference>
<dbReference type="Pfam" id="PF12683">
    <property type="entry name" value="DUF3798"/>
    <property type="match status" value="1"/>
</dbReference>
<organism>
    <name type="scientific">Treponema pallidum (strain Nichols)</name>
    <dbReference type="NCBI Taxonomy" id="243276"/>
    <lineage>
        <taxon>Bacteria</taxon>
        <taxon>Pseudomonadati</taxon>
        <taxon>Spirochaetota</taxon>
        <taxon>Spirochaetia</taxon>
        <taxon>Spirochaetales</taxon>
        <taxon>Treponemataceae</taxon>
        <taxon>Treponema</taxon>
    </lineage>
</organism>
<accession>O83057</accession>
<reference key="1">
    <citation type="journal article" date="1998" name="Science">
        <title>Complete genome sequence of Treponema pallidum, the syphilis spirochete.</title>
        <authorList>
            <person name="Fraser C.M."/>
            <person name="Norris S.J."/>
            <person name="Weinstock G.M."/>
            <person name="White O."/>
            <person name="Sutton G.G."/>
            <person name="Dodson R.J."/>
            <person name="Gwinn M.L."/>
            <person name="Hickey E.K."/>
            <person name="Clayton R.A."/>
            <person name="Ketchum K.A."/>
            <person name="Sodergren E."/>
            <person name="Hardham J.M."/>
            <person name="McLeod M.P."/>
            <person name="Salzberg S.L."/>
            <person name="Peterson J.D."/>
            <person name="Khalak H.G."/>
            <person name="Richardson D.L."/>
            <person name="Howell J.K."/>
            <person name="Chidambaram M."/>
            <person name="Utterback T.R."/>
            <person name="McDonald L.A."/>
            <person name="Artiach P."/>
            <person name="Bowman C."/>
            <person name="Cotton M.D."/>
            <person name="Fujii C."/>
            <person name="Garland S.A."/>
            <person name="Hatch B."/>
            <person name="Horst K."/>
            <person name="Roberts K.M."/>
            <person name="Sandusky M."/>
            <person name="Weidman J.F."/>
            <person name="Smith H.O."/>
            <person name="Venter J.C."/>
        </authorList>
    </citation>
    <scope>NUCLEOTIDE SEQUENCE [LARGE SCALE GENOMIC DNA]</scope>
    <source>
        <strain>Nichols</strain>
    </source>
</reference>
<protein>
    <recommendedName>
        <fullName>Uncharacterized protein TP_0013</fullName>
    </recommendedName>
</protein>
<gene>
    <name type="ordered locus">TP_0013</name>
</gene>
<name>Y013_TREPA</name>
<proteinExistence type="predicted"/>